<dbReference type="EMBL" id="BC118311">
    <property type="protein sequence ID" value="AAI18312.1"/>
    <property type="molecule type" value="mRNA"/>
</dbReference>
<dbReference type="RefSeq" id="NP_001069412.1">
    <property type="nucleotide sequence ID" value="NM_001075944.1"/>
</dbReference>
<dbReference type="SMR" id="Q148H8"/>
<dbReference type="FunCoup" id="Q148H8">
    <property type="interactions" value="11"/>
</dbReference>
<dbReference type="STRING" id="9913.ENSBTAP00000010391"/>
<dbReference type="PaxDb" id="9913-ENSBTAP00000010391"/>
<dbReference type="Ensembl" id="ENSBTAT00000010391.5">
    <property type="protein sequence ID" value="ENSBTAP00000010391.3"/>
    <property type="gene ID" value="ENSBTAG00000007904.6"/>
</dbReference>
<dbReference type="GeneID" id="531057"/>
<dbReference type="KEGG" id="bta:531057"/>
<dbReference type="CTD" id="140807"/>
<dbReference type="VEuPathDB" id="HostDB:ENSBTAG00000007904"/>
<dbReference type="VGNC" id="VGNC:30736">
    <property type="gene designation" value="KRT72"/>
</dbReference>
<dbReference type="eggNOG" id="ENOG502T3SC">
    <property type="taxonomic scope" value="Eukaryota"/>
</dbReference>
<dbReference type="GeneTree" id="ENSGT00940000162105"/>
<dbReference type="HOGENOM" id="CLU_012560_6_1_1"/>
<dbReference type="InParanoid" id="Q148H8"/>
<dbReference type="OMA" id="CKKRYEV"/>
<dbReference type="OrthoDB" id="2441647at2759"/>
<dbReference type="TreeFam" id="TF317854"/>
<dbReference type="Reactome" id="R-BTA-6805567">
    <property type="pathway name" value="Keratinization"/>
</dbReference>
<dbReference type="Reactome" id="R-BTA-6809371">
    <property type="pathway name" value="Formation of the cornified envelope"/>
</dbReference>
<dbReference type="Proteomes" id="UP000009136">
    <property type="component" value="Chromosome 5"/>
</dbReference>
<dbReference type="Bgee" id="ENSBTAG00000007904">
    <property type="expression patterns" value="Expressed in zone of skin and 8 other cell types or tissues"/>
</dbReference>
<dbReference type="GO" id="GO:0045095">
    <property type="term" value="C:keratin filament"/>
    <property type="evidence" value="ECO:0000318"/>
    <property type="project" value="GO_Central"/>
</dbReference>
<dbReference type="GO" id="GO:0030280">
    <property type="term" value="F:structural constituent of skin epidermis"/>
    <property type="evidence" value="ECO:0000318"/>
    <property type="project" value="GO_Central"/>
</dbReference>
<dbReference type="GO" id="GO:0045109">
    <property type="term" value="P:intermediate filament organization"/>
    <property type="evidence" value="ECO:0000318"/>
    <property type="project" value="GO_Central"/>
</dbReference>
<dbReference type="GO" id="GO:0031424">
    <property type="term" value="P:keratinization"/>
    <property type="evidence" value="ECO:0000318"/>
    <property type="project" value="GO_Central"/>
</dbReference>
<dbReference type="FunFam" id="1.20.5.1160:FF:000001">
    <property type="entry name" value="Keratin type II"/>
    <property type="match status" value="1"/>
</dbReference>
<dbReference type="FunFam" id="1.20.5.170:FF:000004">
    <property type="entry name" value="Keratin, type II cytoskeletal 5"/>
    <property type="match status" value="1"/>
</dbReference>
<dbReference type="FunFam" id="1.20.5.500:FF:000001">
    <property type="entry name" value="Type II keratin 23"/>
    <property type="match status" value="1"/>
</dbReference>
<dbReference type="Gene3D" id="1.20.5.170">
    <property type="match status" value="1"/>
</dbReference>
<dbReference type="Gene3D" id="1.20.5.500">
    <property type="entry name" value="Single helix bin"/>
    <property type="match status" value="1"/>
</dbReference>
<dbReference type="Gene3D" id="1.20.5.1160">
    <property type="entry name" value="Vasodilator-stimulated phosphoprotein"/>
    <property type="match status" value="1"/>
</dbReference>
<dbReference type="InterPro" id="IPR018039">
    <property type="entry name" value="IF_conserved"/>
</dbReference>
<dbReference type="InterPro" id="IPR039008">
    <property type="entry name" value="IF_rod_dom"/>
</dbReference>
<dbReference type="InterPro" id="IPR032444">
    <property type="entry name" value="Keratin_2_head"/>
</dbReference>
<dbReference type="InterPro" id="IPR003054">
    <property type="entry name" value="Keratin_II"/>
</dbReference>
<dbReference type="PANTHER" id="PTHR45616">
    <property type="entry name" value="GATA-TYPE DOMAIN-CONTAINING PROTEIN"/>
    <property type="match status" value="1"/>
</dbReference>
<dbReference type="PANTHER" id="PTHR45616:SF2">
    <property type="entry name" value="KERATIN, TYPE II CYTOSKELETAL 72"/>
    <property type="match status" value="1"/>
</dbReference>
<dbReference type="Pfam" id="PF00038">
    <property type="entry name" value="Filament"/>
    <property type="match status" value="1"/>
</dbReference>
<dbReference type="Pfam" id="PF16208">
    <property type="entry name" value="Keratin_2_head"/>
    <property type="match status" value="1"/>
</dbReference>
<dbReference type="PRINTS" id="PR01276">
    <property type="entry name" value="TYPE2KERATIN"/>
</dbReference>
<dbReference type="SMART" id="SM01391">
    <property type="entry name" value="Filament"/>
    <property type="match status" value="1"/>
</dbReference>
<dbReference type="SUPFAM" id="SSF64593">
    <property type="entry name" value="Intermediate filament protein, coiled coil region"/>
    <property type="match status" value="3"/>
</dbReference>
<dbReference type="PROSITE" id="PS00226">
    <property type="entry name" value="IF_ROD_1"/>
    <property type="match status" value="1"/>
</dbReference>
<dbReference type="PROSITE" id="PS51842">
    <property type="entry name" value="IF_ROD_2"/>
    <property type="match status" value="1"/>
</dbReference>
<name>K2C72_BOVIN</name>
<proteinExistence type="evidence at transcript level"/>
<evidence type="ECO:0000250" key="1"/>
<evidence type="ECO:0000255" key="2">
    <source>
        <dbReference type="PROSITE-ProRule" id="PRU01188"/>
    </source>
</evidence>
<evidence type="ECO:0000256" key="3">
    <source>
        <dbReference type="SAM" id="MobiDB-lite"/>
    </source>
</evidence>
<feature type="chain" id="PRO_0000314876" description="Keratin, type II cytoskeletal 72">
    <location>
        <begin position="1"/>
        <end position="524"/>
    </location>
</feature>
<feature type="domain" description="IF rod" evidence="2">
    <location>
        <begin position="137"/>
        <end position="450"/>
    </location>
</feature>
<feature type="region of interest" description="Head">
    <location>
        <begin position="1"/>
        <end position="136"/>
    </location>
</feature>
<feature type="region of interest" description="Coil 1A">
    <location>
        <begin position="137"/>
        <end position="172"/>
    </location>
</feature>
<feature type="region of interest" description="Linker 1">
    <location>
        <begin position="173"/>
        <end position="191"/>
    </location>
</feature>
<feature type="region of interest" description="Coil 1B">
    <location>
        <begin position="192"/>
        <end position="283"/>
    </location>
</feature>
<feature type="region of interest" description="Linker 12">
    <location>
        <begin position="284"/>
        <end position="307"/>
    </location>
</feature>
<feature type="region of interest" description="Coil 2">
    <location>
        <begin position="308"/>
        <end position="446"/>
    </location>
</feature>
<feature type="region of interest" description="Tail">
    <location>
        <begin position="447"/>
        <end position="524"/>
    </location>
</feature>
<feature type="region of interest" description="Disordered" evidence="3">
    <location>
        <begin position="495"/>
        <end position="524"/>
    </location>
</feature>
<feature type="site" description="Stutter">
    <location>
        <position position="388"/>
    </location>
</feature>
<keyword id="KW-0175">Coiled coil</keyword>
<keyword id="KW-0403">Intermediate filament</keyword>
<keyword id="KW-0416">Keratin</keyword>
<keyword id="KW-1185">Reference proteome</keyword>
<gene>
    <name type="primary">KRT72</name>
</gene>
<reference key="1">
    <citation type="submission" date="2006-06" db="EMBL/GenBank/DDBJ databases">
        <authorList>
            <consortium name="NIH - Mammalian Gene Collection (MGC) project"/>
        </authorList>
    </citation>
    <scope>NUCLEOTIDE SEQUENCE [LARGE SCALE MRNA]</scope>
    <source>
        <strain>Hereford</strain>
        <tissue>Fetal skin</tissue>
    </source>
</reference>
<organism>
    <name type="scientific">Bos taurus</name>
    <name type="common">Bovine</name>
    <dbReference type="NCBI Taxonomy" id="9913"/>
    <lineage>
        <taxon>Eukaryota</taxon>
        <taxon>Metazoa</taxon>
        <taxon>Chordata</taxon>
        <taxon>Craniata</taxon>
        <taxon>Vertebrata</taxon>
        <taxon>Euteleostomi</taxon>
        <taxon>Mammalia</taxon>
        <taxon>Eutheria</taxon>
        <taxon>Laurasiatheria</taxon>
        <taxon>Artiodactyla</taxon>
        <taxon>Ruminantia</taxon>
        <taxon>Pecora</taxon>
        <taxon>Bovidae</taxon>
        <taxon>Bovinae</taxon>
        <taxon>Bos</taxon>
    </lineage>
</organism>
<protein>
    <recommendedName>
        <fullName>Keratin, type II cytoskeletal 72</fullName>
    </recommendedName>
    <alternativeName>
        <fullName>Cytokeratin-72</fullName>
        <shortName>CK-72</shortName>
    </alternativeName>
    <alternativeName>
        <fullName>Keratin-72</fullName>
        <shortName>K72</shortName>
    </alternativeName>
    <alternativeName>
        <fullName>Type II inner root sheath-specific keratin-K6irs2</fullName>
    </alternativeName>
    <alternativeName>
        <fullName>Type-II keratin Kb35</fullName>
    </alternativeName>
</protein>
<sequence>MSRQLNLYPGGERLAFSGCSAIISSRVSSSTASFRASGIKGTATFGSRSLFNCGGGRRPALSSAAGRGGSALGSCAATGGGRRGGFVGTVFGSAGLGPACPSVCPPGGIPQVTVNKSLLSPLNVELDPEIQKVRAQEREQIKALNNKFASFIDKVRFLEQQNQVLGTKWELLQQLDLNNCKNNLEPILEGYTSNLRKQLEMLSGDRVRLDSELRSMRDVVEEYKKRYEVEINRRTAAENEFVMLKKDVDAAYMNKVELQAKVDSLTDEIKFLKCLYEGEIAQLQSHISDTSVILSMDNNRDLDLDSIIAQVRAQYEEIALKSKAEAEALYQTKIQELQATAGQHGDDLKLTKAEISDLNRMIQRIRSEIGNVKKQCSNLEMAIADAEQRGDCALKDARAKLDELDAALLQAKEELARMMREYQELMSTKLALDMEIATYRKLLEGEECRMSGEYPNSVSISVISNTSTGAGGTGFSMGFGALSSYSYKSSAVDVKTKGSCGGSELKDAPAKTSGSSCATKKASR</sequence>
<accession>Q148H8</accession>
<comment type="function">
    <text evidence="1">Has a role in hair formation. Specific component of keratin intermediate filaments in the inner root sheath (IRS) of the hair follicle (By similarity).</text>
</comment>
<comment type="subunit">
    <text>Heterotetramer of two type I and two type II keratins.</text>
</comment>
<comment type="miscellaneous">
    <text>There are two types of cytoskeletal and microfibrillar keratin, I (acidic) and II (neutral to basic) (40-55 and 56-70 kDa, respectively).</text>
</comment>
<comment type="similarity">
    <text evidence="2">Belongs to the intermediate filament family.</text>
</comment>